<name>IHFB_METSB</name>
<comment type="function">
    <text evidence="1">This protein is one of the two subunits of integration host factor, a specific DNA-binding protein that functions in genetic recombination as well as in transcriptional and translational control.</text>
</comment>
<comment type="subunit">
    <text evidence="1">Heterodimer of an alpha and a beta chain.</text>
</comment>
<comment type="similarity">
    <text evidence="1">Belongs to the bacterial histone-like protein family.</text>
</comment>
<gene>
    <name evidence="1" type="primary">ihfB</name>
    <name evidence="1" type="synonym">himD</name>
    <name type="ordered locus">Msil_0144</name>
</gene>
<sequence>MIKSELVQRIADRNPHLYLRDVEKIVNAILDEITNALSRGDRVELRGFGAFSVKHRDARVGRNPRTGAHVSVDEKVVPFFKTGKEMRERLNNGVDD</sequence>
<reference key="1">
    <citation type="journal article" date="2010" name="J. Bacteriol.">
        <title>Complete genome sequence of the aerobic facultative methanotroph Methylocella silvestris BL2.</title>
        <authorList>
            <person name="Chen Y."/>
            <person name="Crombie A."/>
            <person name="Rahman M.T."/>
            <person name="Dedysh S.N."/>
            <person name="Liesack W."/>
            <person name="Stott M.B."/>
            <person name="Alam M."/>
            <person name="Theisen A.R."/>
            <person name="Murrell J.C."/>
            <person name="Dunfield P.F."/>
        </authorList>
    </citation>
    <scope>NUCLEOTIDE SEQUENCE [LARGE SCALE GENOMIC DNA]</scope>
    <source>
        <strain>DSM 15510 / CIP 108128 / LMG 27833 / NCIMB 13906 / BL2</strain>
    </source>
</reference>
<evidence type="ECO:0000255" key="1">
    <source>
        <dbReference type="HAMAP-Rule" id="MF_00381"/>
    </source>
</evidence>
<proteinExistence type="inferred from homology"/>
<keyword id="KW-0233">DNA recombination</keyword>
<keyword id="KW-0238">DNA-binding</keyword>
<keyword id="KW-1185">Reference proteome</keyword>
<keyword id="KW-0804">Transcription</keyword>
<keyword id="KW-0805">Transcription regulation</keyword>
<keyword id="KW-0810">Translation regulation</keyword>
<protein>
    <recommendedName>
        <fullName evidence="1">Integration host factor subunit beta</fullName>
        <shortName evidence="1">IHF-beta</shortName>
    </recommendedName>
</protein>
<organism>
    <name type="scientific">Methylocella silvestris (strain DSM 15510 / CIP 108128 / LMG 27833 / NCIMB 13906 / BL2)</name>
    <dbReference type="NCBI Taxonomy" id="395965"/>
    <lineage>
        <taxon>Bacteria</taxon>
        <taxon>Pseudomonadati</taxon>
        <taxon>Pseudomonadota</taxon>
        <taxon>Alphaproteobacteria</taxon>
        <taxon>Hyphomicrobiales</taxon>
        <taxon>Beijerinckiaceae</taxon>
        <taxon>Methylocella</taxon>
    </lineage>
</organism>
<feature type="chain" id="PRO_1000190445" description="Integration host factor subunit beta">
    <location>
        <begin position="1"/>
        <end position="96"/>
    </location>
</feature>
<dbReference type="EMBL" id="CP001280">
    <property type="protein sequence ID" value="ACK49125.1"/>
    <property type="molecule type" value="Genomic_DNA"/>
</dbReference>
<dbReference type="RefSeq" id="WP_012589195.1">
    <property type="nucleotide sequence ID" value="NC_011666.1"/>
</dbReference>
<dbReference type="SMR" id="B8EMZ0"/>
<dbReference type="STRING" id="395965.Msil_0144"/>
<dbReference type="KEGG" id="msl:Msil_0144"/>
<dbReference type="eggNOG" id="COG0776">
    <property type="taxonomic scope" value="Bacteria"/>
</dbReference>
<dbReference type="HOGENOM" id="CLU_105066_2_1_5"/>
<dbReference type="OrthoDB" id="9804203at2"/>
<dbReference type="Proteomes" id="UP000002257">
    <property type="component" value="Chromosome"/>
</dbReference>
<dbReference type="GO" id="GO:0005694">
    <property type="term" value="C:chromosome"/>
    <property type="evidence" value="ECO:0007669"/>
    <property type="project" value="InterPro"/>
</dbReference>
<dbReference type="GO" id="GO:0005829">
    <property type="term" value="C:cytosol"/>
    <property type="evidence" value="ECO:0007669"/>
    <property type="project" value="TreeGrafter"/>
</dbReference>
<dbReference type="GO" id="GO:0003677">
    <property type="term" value="F:DNA binding"/>
    <property type="evidence" value="ECO:0007669"/>
    <property type="project" value="UniProtKB-UniRule"/>
</dbReference>
<dbReference type="GO" id="GO:0030527">
    <property type="term" value="F:structural constituent of chromatin"/>
    <property type="evidence" value="ECO:0007669"/>
    <property type="project" value="InterPro"/>
</dbReference>
<dbReference type="GO" id="GO:0006310">
    <property type="term" value="P:DNA recombination"/>
    <property type="evidence" value="ECO:0007669"/>
    <property type="project" value="UniProtKB-UniRule"/>
</dbReference>
<dbReference type="GO" id="GO:0006355">
    <property type="term" value="P:regulation of DNA-templated transcription"/>
    <property type="evidence" value="ECO:0007669"/>
    <property type="project" value="UniProtKB-UniRule"/>
</dbReference>
<dbReference type="GO" id="GO:0006417">
    <property type="term" value="P:regulation of translation"/>
    <property type="evidence" value="ECO:0007669"/>
    <property type="project" value="UniProtKB-UniRule"/>
</dbReference>
<dbReference type="CDD" id="cd13836">
    <property type="entry name" value="IHF_B"/>
    <property type="match status" value="1"/>
</dbReference>
<dbReference type="FunFam" id="4.10.520.10:FF:000008">
    <property type="entry name" value="Integration host factor subunit beta"/>
    <property type="match status" value="1"/>
</dbReference>
<dbReference type="Gene3D" id="4.10.520.10">
    <property type="entry name" value="IHF-like DNA-binding proteins"/>
    <property type="match status" value="1"/>
</dbReference>
<dbReference type="HAMAP" id="MF_00381">
    <property type="entry name" value="IHF_beta"/>
    <property type="match status" value="1"/>
</dbReference>
<dbReference type="InterPro" id="IPR000119">
    <property type="entry name" value="Hist_DNA-bd"/>
</dbReference>
<dbReference type="InterPro" id="IPR020816">
    <property type="entry name" value="Histone-like_DNA-bd_CS"/>
</dbReference>
<dbReference type="InterPro" id="IPR010992">
    <property type="entry name" value="IHF-like_DNA-bd_dom_sf"/>
</dbReference>
<dbReference type="InterPro" id="IPR005685">
    <property type="entry name" value="IHF_beta"/>
</dbReference>
<dbReference type="NCBIfam" id="TIGR00988">
    <property type="entry name" value="hip"/>
    <property type="match status" value="1"/>
</dbReference>
<dbReference type="NCBIfam" id="NF001222">
    <property type="entry name" value="PRK00199.1"/>
    <property type="match status" value="1"/>
</dbReference>
<dbReference type="PANTHER" id="PTHR33175">
    <property type="entry name" value="DNA-BINDING PROTEIN HU"/>
    <property type="match status" value="1"/>
</dbReference>
<dbReference type="PANTHER" id="PTHR33175:SF5">
    <property type="entry name" value="INTEGRATION HOST FACTOR SUBUNIT BETA"/>
    <property type="match status" value="1"/>
</dbReference>
<dbReference type="Pfam" id="PF00216">
    <property type="entry name" value="Bac_DNA_binding"/>
    <property type="match status" value="1"/>
</dbReference>
<dbReference type="PRINTS" id="PR01727">
    <property type="entry name" value="DNABINDINGHU"/>
</dbReference>
<dbReference type="SMART" id="SM00411">
    <property type="entry name" value="BHL"/>
    <property type="match status" value="1"/>
</dbReference>
<dbReference type="SUPFAM" id="SSF47729">
    <property type="entry name" value="IHF-like DNA-binding proteins"/>
    <property type="match status" value="1"/>
</dbReference>
<dbReference type="PROSITE" id="PS00045">
    <property type="entry name" value="HISTONE_LIKE"/>
    <property type="match status" value="1"/>
</dbReference>
<accession>B8EMZ0</accession>